<comment type="function">
    <text evidence="1">Small subunit of the glutamine-dependent carbamoyl phosphate synthetase (CPSase). CPSase catalyzes the formation of carbamoyl phosphate from the ammonia moiety of glutamine, carbonate, and phosphate donated by ATP, constituting the first step of 2 biosynthetic pathways, one leading to arginine and/or urea and the other to pyrimidine nucleotides. The small subunit (glutamine amidotransferase) binds and cleaves glutamine to supply the large subunit with the substrate ammonia.</text>
</comment>
<comment type="catalytic activity">
    <reaction evidence="1">
        <text>hydrogencarbonate + L-glutamine + 2 ATP + H2O = carbamoyl phosphate + L-glutamate + 2 ADP + phosphate + 2 H(+)</text>
        <dbReference type="Rhea" id="RHEA:18633"/>
        <dbReference type="ChEBI" id="CHEBI:15377"/>
        <dbReference type="ChEBI" id="CHEBI:15378"/>
        <dbReference type="ChEBI" id="CHEBI:17544"/>
        <dbReference type="ChEBI" id="CHEBI:29985"/>
        <dbReference type="ChEBI" id="CHEBI:30616"/>
        <dbReference type="ChEBI" id="CHEBI:43474"/>
        <dbReference type="ChEBI" id="CHEBI:58228"/>
        <dbReference type="ChEBI" id="CHEBI:58359"/>
        <dbReference type="ChEBI" id="CHEBI:456216"/>
        <dbReference type="EC" id="6.3.5.5"/>
    </reaction>
</comment>
<comment type="catalytic activity">
    <molecule>Carbamoyl phosphate synthase small chain</molecule>
    <reaction evidence="1">
        <text>L-glutamine + H2O = L-glutamate + NH4(+)</text>
        <dbReference type="Rhea" id="RHEA:15889"/>
        <dbReference type="ChEBI" id="CHEBI:15377"/>
        <dbReference type="ChEBI" id="CHEBI:28938"/>
        <dbReference type="ChEBI" id="CHEBI:29985"/>
        <dbReference type="ChEBI" id="CHEBI:58359"/>
    </reaction>
</comment>
<comment type="pathway">
    <text evidence="1">Amino-acid biosynthesis; L-arginine biosynthesis; carbamoyl phosphate from bicarbonate: step 1/1.</text>
</comment>
<comment type="pathway">
    <text evidence="1">Pyrimidine metabolism; UMP biosynthesis via de novo pathway; (S)-dihydroorotate from bicarbonate: step 1/3.</text>
</comment>
<comment type="subunit">
    <text evidence="1">Composed of two chains; the small (or glutamine) chain promotes the hydrolysis of glutamine to ammonia, which is used by the large (or ammonia) chain to synthesize carbamoyl phosphate. Tetramer of heterodimers (alpha,beta)4.</text>
</comment>
<comment type="similarity">
    <text evidence="1">Belongs to the CarA family.</text>
</comment>
<dbReference type="EC" id="6.3.5.5" evidence="1"/>
<dbReference type="EMBL" id="AL596170">
    <property type="protein sequence ID" value="CAC97180.1"/>
    <property type="molecule type" value="Genomic_DNA"/>
</dbReference>
<dbReference type="PIR" id="AD1676">
    <property type="entry name" value="AD1676"/>
</dbReference>
<dbReference type="RefSeq" id="WP_003762963.1">
    <property type="nucleotide sequence ID" value="NC_003212.1"/>
</dbReference>
<dbReference type="SMR" id="Q92AH2"/>
<dbReference type="STRING" id="272626.gene:17566308"/>
<dbReference type="GeneID" id="93235288"/>
<dbReference type="KEGG" id="lin:pyrAa"/>
<dbReference type="eggNOG" id="COG0505">
    <property type="taxonomic scope" value="Bacteria"/>
</dbReference>
<dbReference type="HOGENOM" id="CLU_035901_2_1_9"/>
<dbReference type="OrthoDB" id="9804328at2"/>
<dbReference type="UniPathway" id="UPA00068">
    <property type="reaction ID" value="UER00171"/>
</dbReference>
<dbReference type="UniPathway" id="UPA00070">
    <property type="reaction ID" value="UER00115"/>
</dbReference>
<dbReference type="Proteomes" id="UP000002513">
    <property type="component" value="Chromosome"/>
</dbReference>
<dbReference type="GO" id="GO:0005524">
    <property type="term" value="F:ATP binding"/>
    <property type="evidence" value="ECO:0007669"/>
    <property type="project" value="UniProtKB-UniRule"/>
</dbReference>
<dbReference type="GO" id="GO:0004088">
    <property type="term" value="F:carbamoyl-phosphate synthase (glutamine-hydrolyzing) activity"/>
    <property type="evidence" value="ECO:0007669"/>
    <property type="project" value="UniProtKB-UniRule"/>
</dbReference>
<dbReference type="GO" id="GO:0004359">
    <property type="term" value="F:glutaminase activity"/>
    <property type="evidence" value="ECO:0007669"/>
    <property type="project" value="RHEA"/>
</dbReference>
<dbReference type="GO" id="GO:0006207">
    <property type="term" value="P:'de novo' pyrimidine nucleobase biosynthetic process"/>
    <property type="evidence" value="ECO:0007669"/>
    <property type="project" value="InterPro"/>
</dbReference>
<dbReference type="GO" id="GO:0044205">
    <property type="term" value="P:'de novo' UMP biosynthetic process"/>
    <property type="evidence" value="ECO:0007669"/>
    <property type="project" value="UniProtKB-UniRule"/>
</dbReference>
<dbReference type="GO" id="GO:0006541">
    <property type="term" value="P:glutamine metabolic process"/>
    <property type="evidence" value="ECO:0007669"/>
    <property type="project" value="InterPro"/>
</dbReference>
<dbReference type="GO" id="GO:0006526">
    <property type="term" value="P:L-arginine biosynthetic process"/>
    <property type="evidence" value="ECO:0007669"/>
    <property type="project" value="UniProtKB-UniRule"/>
</dbReference>
<dbReference type="CDD" id="cd01744">
    <property type="entry name" value="GATase1_CPSase"/>
    <property type="match status" value="1"/>
</dbReference>
<dbReference type="FunFam" id="3.40.50.880:FF:000029">
    <property type="entry name" value="Carbamoyl-phosphate synthase small chain"/>
    <property type="match status" value="1"/>
</dbReference>
<dbReference type="FunFam" id="3.50.30.20:FF:000001">
    <property type="entry name" value="Carbamoyl-phosphate synthase small chain"/>
    <property type="match status" value="1"/>
</dbReference>
<dbReference type="Gene3D" id="3.40.50.880">
    <property type="match status" value="1"/>
</dbReference>
<dbReference type="Gene3D" id="3.50.30.20">
    <property type="entry name" value="Carbamoyl-phosphate synthase small subunit, N-terminal domain"/>
    <property type="match status" value="1"/>
</dbReference>
<dbReference type="HAMAP" id="MF_01209">
    <property type="entry name" value="CPSase_S_chain"/>
    <property type="match status" value="1"/>
</dbReference>
<dbReference type="InterPro" id="IPR050472">
    <property type="entry name" value="Anth_synth/Amidotransfase"/>
</dbReference>
<dbReference type="InterPro" id="IPR006274">
    <property type="entry name" value="CarbamoylP_synth_ssu"/>
</dbReference>
<dbReference type="InterPro" id="IPR002474">
    <property type="entry name" value="CarbamoylP_synth_ssu_N"/>
</dbReference>
<dbReference type="InterPro" id="IPR036480">
    <property type="entry name" value="CarbP_synth_ssu_N_sf"/>
</dbReference>
<dbReference type="InterPro" id="IPR029062">
    <property type="entry name" value="Class_I_gatase-like"/>
</dbReference>
<dbReference type="InterPro" id="IPR035686">
    <property type="entry name" value="CPSase_GATase1"/>
</dbReference>
<dbReference type="InterPro" id="IPR017926">
    <property type="entry name" value="GATASE"/>
</dbReference>
<dbReference type="NCBIfam" id="TIGR01368">
    <property type="entry name" value="CPSaseIIsmall"/>
    <property type="match status" value="1"/>
</dbReference>
<dbReference type="NCBIfam" id="NF009475">
    <property type="entry name" value="PRK12838.1"/>
    <property type="match status" value="1"/>
</dbReference>
<dbReference type="PANTHER" id="PTHR43418:SF7">
    <property type="entry name" value="CARBAMOYL-PHOSPHATE SYNTHASE SMALL CHAIN"/>
    <property type="match status" value="1"/>
</dbReference>
<dbReference type="PANTHER" id="PTHR43418">
    <property type="entry name" value="MULTIFUNCTIONAL TRYPTOPHAN BIOSYNTHESIS PROTEIN-RELATED"/>
    <property type="match status" value="1"/>
</dbReference>
<dbReference type="Pfam" id="PF00988">
    <property type="entry name" value="CPSase_sm_chain"/>
    <property type="match status" value="1"/>
</dbReference>
<dbReference type="Pfam" id="PF00117">
    <property type="entry name" value="GATase"/>
    <property type="match status" value="1"/>
</dbReference>
<dbReference type="PRINTS" id="PR00097">
    <property type="entry name" value="ANTSNTHASEII"/>
</dbReference>
<dbReference type="PRINTS" id="PR00099">
    <property type="entry name" value="CPSGATASE"/>
</dbReference>
<dbReference type="PRINTS" id="PR00096">
    <property type="entry name" value="GATASE"/>
</dbReference>
<dbReference type="SMART" id="SM01097">
    <property type="entry name" value="CPSase_sm_chain"/>
    <property type="match status" value="1"/>
</dbReference>
<dbReference type="SUPFAM" id="SSF52021">
    <property type="entry name" value="Carbamoyl phosphate synthetase, small subunit N-terminal domain"/>
    <property type="match status" value="1"/>
</dbReference>
<dbReference type="SUPFAM" id="SSF52317">
    <property type="entry name" value="Class I glutamine amidotransferase-like"/>
    <property type="match status" value="1"/>
</dbReference>
<dbReference type="PROSITE" id="PS51273">
    <property type="entry name" value="GATASE_TYPE_1"/>
    <property type="match status" value="1"/>
</dbReference>
<gene>
    <name evidence="1" type="primary">carA</name>
    <name type="synonym">pyrAA</name>
    <name type="ordered locus">lin1950</name>
</gene>
<keyword id="KW-0028">Amino-acid biosynthesis</keyword>
<keyword id="KW-0055">Arginine biosynthesis</keyword>
<keyword id="KW-0067">ATP-binding</keyword>
<keyword id="KW-0315">Glutamine amidotransferase</keyword>
<keyword id="KW-0436">Ligase</keyword>
<keyword id="KW-0547">Nucleotide-binding</keyword>
<keyword id="KW-0665">Pyrimidine biosynthesis</keyword>
<accession>Q92AH2</accession>
<evidence type="ECO:0000255" key="1">
    <source>
        <dbReference type="HAMAP-Rule" id="MF_01209"/>
    </source>
</evidence>
<protein>
    <recommendedName>
        <fullName evidence="1">Carbamoyl phosphate synthase small chain</fullName>
        <ecNumber evidence="1">6.3.5.5</ecNumber>
    </recommendedName>
    <alternativeName>
        <fullName evidence="1">Carbamoyl phosphate synthetase glutamine chain</fullName>
    </alternativeName>
</protein>
<sequence length="363" mass="40157">MTKRILMLEDGNYFIGDAIGSEKETIGEVVFNTGMTGYQETITDPSYYGQIITFTYPLVGNYGVNRDDFESINPAVKGVVVREAAEYPSNWRNQITLNEFLKEKGIPGIAGIDTRKLTKLIRKEGTLKGILSAATADKEELLHHLRSVRLPVDQVHEVSSAKAFASPGDGKRVVLVDYGVKSSILRELNKRNCYVTVVPYNTTAEEILAMHPDGVMLSNGPGDPKDVPEALEMIRGIQGKLPLFGICLGHQLFALANGADTFKLKFGHRGANHPVKELATGRVDFTAQNHGYAVEKESLIGTDLKVTHIELNDETVEGLAHKEYQAYTVQYHPEANPGPSDVNYLFDEFMEMMNVKEEGELHA</sequence>
<name>CARA_LISIN</name>
<reference key="1">
    <citation type="journal article" date="2001" name="Science">
        <title>Comparative genomics of Listeria species.</title>
        <authorList>
            <person name="Glaser P."/>
            <person name="Frangeul L."/>
            <person name="Buchrieser C."/>
            <person name="Rusniok C."/>
            <person name="Amend A."/>
            <person name="Baquero F."/>
            <person name="Berche P."/>
            <person name="Bloecker H."/>
            <person name="Brandt P."/>
            <person name="Chakraborty T."/>
            <person name="Charbit A."/>
            <person name="Chetouani F."/>
            <person name="Couve E."/>
            <person name="de Daruvar A."/>
            <person name="Dehoux P."/>
            <person name="Domann E."/>
            <person name="Dominguez-Bernal G."/>
            <person name="Duchaud E."/>
            <person name="Durant L."/>
            <person name="Dussurget O."/>
            <person name="Entian K.-D."/>
            <person name="Fsihi H."/>
            <person name="Garcia-del Portillo F."/>
            <person name="Garrido P."/>
            <person name="Gautier L."/>
            <person name="Goebel W."/>
            <person name="Gomez-Lopez N."/>
            <person name="Hain T."/>
            <person name="Hauf J."/>
            <person name="Jackson D."/>
            <person name="Jones L.-M."/>
            <person name="Kaerst U."/>
            <person name="Kreft J."/>
            <person name="Kuhn M."/>
            <person name="Kunst F."/>
            <person name="Kurapkat G."/>
            <person name="Madueno E."/>
            <person name="Maitournam A."/>
            <person name="Mata Vicente J."/>
            <person name="Ng E."/>
            <person name="Nedjari H."/>
            <person name="Nordsiek G."/>
            <person name="Novella S."/>
            <person name="de Pablos B."/>
            <person name="Perez-Diaz J.-C."/>
            <person name="Purcell R."/>
            <person name="Remmel B."/>
            <person name="Rose M."/>
            <person name="Schlueter T."/>
            <person name="Simoes N."/>
            <person name="Tierrez A."/>
            <person name="Vazquez-Boland J.-A."/>
            <person name="Voss H."/>
            <person name="Wehland J."/>
            <person name="Cossart P."/>
        </authorList>
    </citation>
    <scope>NUCLEOTIDE SEQUENCE [LARGE SCALE GENOMIC DNA]</scope>
    <source>
        <strain>ATCC BAA-680 / CLIP 11262</strain>
    </source>
</reference>
<feature type="chain" id="PRO_0000112290" description="Carbamoyl phosphate synthase small chain">
    <location>
        <begin position="1"/>
        <end position="363"/>
    </location>
</feature>
<feature type="domain" description="Glutamine amidotransferase type-1" evidence="1">
    <location>
        <begin position="172"/>
        <end position="359"/>
    </location>
</feature>
<feature type="region of interest" description="CPSase" evidence="1">
    <location>
        <begin position="1"/>
        <end position="172"/>
    </location>
</feature>
<feature type="region of interest" description="CPSase">
    <location>
        <begin position="1"/>
        <end position="168"/>
    </location>
</feature>
<feature type="active site" description="Nucleophile" evidence="1">
    <location>
        <position position="247"/>
    </location>
</feature>
<feature type="active site" evidence="1">
    <location>
        <position position="332"/>
    </location>
</feature>
<feature type="active site" evidence="1">
    <location>
        <position position="334"/>
    </location>
</feature>
<feature type="binding site" evidence="1">
    <location>
        <position position="46"/>
    </location>
    <ligand>
        <name>L-glutamine</name>
        <dbReference type="ChEBI" id="CHEBI:58359"/>
    </ligand>
</feature>
<feature type="binding site" evidence="1">
    <location>
        <position position="220"/>
    </location>
    <ligand>
        <name>L-glutamine</name>
        <dbReference type="ChEBI" id="CHEBI:58359"/>
    </ligand>
</feature>
<feature type="binding site" evidence="1">
    <location>
        <position position="222"/>
    </location>
    <ligand>
        <name>L-glutamine</name>
        <dbReference type="ChEBI" id="CHEBI:58359"/>
    </ligand>
</feature>
<feature type="binding site" evidence="1">
    <location>
        <position position="248"/>
    </location>
    <ligand>
        <name>L-glutamine</name>
        <dbReference type="ChEBI" id="CHEBI:58359"/>
    </ligand>
</feature>
<feature type="binding site" evidence="1">
    <location>
        <position position="251"/>
    </location>
    <ligand>
        <name>L-glutamine</name>
        <dbReference type="ChEBI" id="CHEBI:58359"/>
    </ligand>
</feature>
<feature type="binding site" evidence="1">
    <location>
        <position position="289"/>
    </location>
    <ligand>
        <name>L-glutamine</name>
        <dbReference type="ChEBI" id="CHEBI:58359"/>
    </ligand>
</feature>
<feature type="binding site" evidence="1">
    <location>
        <position position="291"/>
    </location>
    <ligand>
        <name>L-glutamine</name>
        <dbReference type="ChEBI" id="CHEBI:58359"/>
    </ligand>
</feature>
<feature type="binding site" evidence="1">
    <location>
        <position position="292"/>
    </location>
    <ligand>
        <name>L-glutamine</name>
        <dbReference type="ChEBI" id="CHEBI:58359"/>
    </ligand>
</feature>
<proteinExistence type="inferred from homology"/>
<organism>
    <name type="scientific">Listeria innocua serovar 6a (strain ATCC BAA-680 / CLIP 11262)</name>
    <dbReference type="NCBI Taxonomy" id="272626"/>
    <lineage>
        <taxon>Bacteria</taxon>
        <taxon>Bacillati</taxon>
        <taxon>Bacillota</taxon>
        <taxon>Bacilli</taxon>
        <taxon>Bacillales</taxon>
        <taxon>Listeriaceae</taxon>
        <taxon>Listeria</taxon>
    </lineage>
</organism>